<dbReference type="EMBL" id="BC079430">
    <property type="protein sequence ID" value="AAH79430.1"/>
    <property type="molecule type" value="mRNA"/>
</dbReference>
<dbReference type="RefSeq" id="NP_001013901.1">
    <property type="nucleotide sequence ID" value="NM_001013879.1"/>
</dbReference>
<dbReference type="RefSeq" id="XP_006252861.1">
    <property type="nucleotide sequence ID" value="XM_006252799.4"/>
</dbReference>
<dbReference type="FunCoup" id="Q6AXP1">
    <property type="interactions" value="1277"/>
</dbReference>
<dbReference type="GlyGen" id="Q6AXP1">
    <property type="glycosylation" value="1 site"/>
</dbReference>
<dbReference type="iPTMnet" id="Q6AXP1"/>
<dbReference type="PhosphoSitePlus" id="Q6AXP1"/>
<dbReference type="PaxDb" id="10116-ENSRNOP00000032342"/>
<dbReference type="GeneID" id="290615"/>
<dbReference type="KEGG" id="rno:290615"/>
<dbReference type="UCSC" id="RGD:1311847">
    <property type="organism name" value="rat"/>
</dbReference>
<dbReference type="AGR" id="RGD:1311847"/>
<dbReference type="CTD" id="290615"/>
<dbReference type="RGD" id="1311847">
    <property type="gene designation" value="C16h19orf44"/>
</dbReference>
<dbReference type="VEuPathDB" id="HostDB:ENSRNOG00000023700"/>
<dbReference type="eggNOG" id="ENOG502RMHR">
    <property type="taxonomic scope" value="Eukaryota"/>
</dbReference>
<dbReference type="HOGENOM" id="CLU_028158_0_0_1"/>
<dbReference type="InParanoid" id="Q6AXP1"/>
<dbReference type="OrthoDB" id="91356at9989"/>
<dbReference type="PhylomeDB" id="Q6AXP1"/>
<dbReference type="TreeFam" id="TF330762"/>
<dbReference type="PRO" id="PR:Q6AXP1"/>
<dbReference type="Proteomes" id="UP000002494">
    <property type="component" value="Chromosome 16"/>
</dbReference>
<dbReference type="Bgee" id="ENSRNOG00000023700">
    <property type="expression patterns" value="Expressed in testis and 18 other cell types or tissues"/>
</dbReference>
<dbReference type="InterPro" id="IPR040120">
    <property type="entry name" value="C19orf44-like"/>
</dbReference>
<dbReference type="InterPro" id="IPR027884">
    <property type="entry name" value="DUF4614"/>
</dbReference>
<dbReference type="PANTHER" id="PTHR22409">
    <property type="entry name" value="CHROMOSOME 19 OPEN READING FRAME 44"/>
    <property type="match status" value="1"/>
</dbReference>
<dbReference type="PANTHER" id="PTHR22409:SF2">
    <property type="entry name" value="CHROMOSOME 19 OPEN READING FRAME 44"/>
    <property type="match status" value="1"/>
</dbReference>
<dbReference type="Pfam" id="PF15391">
    <property type="entry name" value="DUF4614"/>
    <property type="match status" value="1"/>
</dbReference>
<organism>
    <name type="scientific">Rattus norvegicus</name>
    <name type="common">Rat</name>
    <dbReference type="NCBI Taxonomy" id="10116"/>
    <lineage>
        <taxon>Eukaryota</taxon>
        <taxon>Metazoa</taxon>
        <taxon>Chordata</taxon>
        <taxon>Craniata</taxon>
        <taxon>Vertebrata</taxon>
        <taxon>Euteleostomi</taxon>
        <taxon>Mammalia</taxon>
        <taxon>Eutheria</taxon>
        <taxon>Euarchontoglires</taxon>
        <taxon>Glires</taxon>
        <taxon>Rodentia</taxon>
        <taxon>Myomorpha</taxon>
        <taxon>Muroidea</taxon>
        <taxon>Muridae</taxon>
        <taxon>Murinae</taxon>
        <taxon>Rattus</taxon>
    </lineage>
</organism>
<evidence type="ECO:0000250" key="1">
    <source>
        <dbReference type="UniProtKB" id="Q9H6X5"/>
    </source>
</evidence>
<evidence type="ECO:0000256" key="2">
    <source>
        <dbReference type="SAM" id="MobiDB-lite"/>
    </source>
</evidence>
<evidence type="ECO:0007744" key="3">
    <source>
    </source>
</evidence>
<name>CS044_RAT</name>
<proteinExistence type="evidence at protein level"/>
<sequence>MASTRRPFGPPHGAFDFRDMFFDSSKMEEIRNVQARSLGQMAPGQSRILKRNQTMDEKYLLPKEEALAGTGVRLSLRPPTISSKSRASEALRKLAQIETKILKRRQVPTAWSGMESDSTASERSLPQRTDTTSVSSQYPLRTFQKQVCKTSVVGDDGQSGKGSRFLKKKELPAEARSPVLAAETEKQVLLPTQREPARKYDAPDSDEEEMKVLLGSLMESSGEKERNGNQELPGTRSDLGKVFLDLTPDQPGVLCLLSADQSSLKSTSVSLRAQSLQTRSGGDPASLTTSPSILRDDFSRSASSKRECIKLASSPSRMETESSEEPVSEAAADSLHDFRINILSIDDLVLADGYKSDGEQKGVTTVVEDEEDLTTEHEISEHPGASSTAAVWSHSMSSARSMETPTALSVSPVYSEDFEQFSGPLALEESLDRTLDTLSKFSSGEQTDTVSRQPLSRTEWGRGVTRVVKETAVQTLDPAFAYQWTKAGGMAAIGPTLGGGYVDPVPIASHIISADAIEALTAYSPAVLALNDMLKQQLSLTQQFIEASHHLHHSLLRSLDEDSFHYHTLEEAKEYIRCHRPAPLTMEAALQEVRKELEVHLDINDSHVEASKAAALPAEPIDGL</sequence>
<protein>
    <recommendedName>
        <fullName>Uncharacterized protein C19orf44 homolog</fullName>
    </recommendedName>
</protein>
<accession>Q6AXP1</accession>
<keyword id="KW-0597">Phosphoprotein</keyword>
<keyword id="KW-1185">Reference proteome</keyword>
<feature type="chain" id="PRO_0000291923" description="Uncharacterized protein C19orf44 homolog">
    <location>
        <begin position="1"/>
        <end position="624"/>
    </location>
</feature>
<feature type="region of interest" description="Disordered" evidence="2">
    <location>
        <begin position="108"/>
        <end position="138"/>
    </location>
</feature>
<feature type="region of interest" description="Disordered" evidence="2">
    <location>
        <begin position="217"/>
        <end position="236"/>
    </location>
</feature>
<feature type="region of interest" description="Disordered" evidence="2">
    <location>
        <begin position="305"/>
        <end position="329"/>
    </location>
</feature>
<feature type="compositionally biased region" description="Polar residues" evidence="2">
    <location>
        <begin position="115"/>
        <end position="138"/>
    </location>
</feature>
<feature type="modified residue" description="Phosphoserine" evidence="1">
    <location>
        <position position="112"/>
    </location>
</feature>
<feature type="modified residue" description="Phosphoserine" evidence="3">
    <location>
        <position position="205"/>
    </location>
</feature>
<reference key="1">
    <citation type="journal article" date="2004" name="Genome Res.">
        <title>The status, quality, and expansion of the NIH full-length cDNA project: the Mammalian Gene Collection (MGC).</title>
        <authorList>
            <consortium name="The MGC Project Team"/>
        </authorList>
    </citation>
    <scope>NUCLEOTIDE SEQUENCE [LARGE SCALE MRNA]</scope>
    <source>
        <tissue>Testis</tissue>
    </source>
</reference>
<reference key="2">
    <citation type="journal article" date="2012" name="Nat. Commun.">
        <title>Quantitative maps of protein phosphorylation sites across 14 different rat organs and tissues.</title>
        <authorList>
            <person name="Lundby A."/>
            <person name="Secher A."/>
            <person name="Lage K."/>
            <person name="Nordsborg N.B."/>
            <person name="Dmytriyev A."/>
            <person name="Lundby C."/>
            <person name="Olsen J.V."/>
        </authorList>
    </citation>
    <scope>PHOSPHORYLATION [LARGE SCALE ANALYSIS] AT SER-205</scope>
    <scope>IDENTIFICATION BY MASS SPECTROMETRY [LARGE SCALE ANALYSIS]</scope>
</reference>